<protein>
    <recommendedName>
        <fullName evidence="4">HTH-type transcriptional regulator HbdR</fullName>
    </recommendedName>
</protein>
<comment type="function">
    <text evidence="2">Transcriptional regulator that controls the expression of the hbd cluster, which contains three catabolic operons and is responsible for the anaerobic degradation of 3-hydroxybenzoate (PubMed:39216330). HbdR suppresses the activity of the three catabolic promoters (PhbdN, PhbdE and PhbdH) by binding to a conserved palindromic operator box (PubMed:39216330). In addition, it slightly increases activity of its own promoter (PhbdR) (PubMed:39216330). The HbdR-mediated repression of hbd genes may play a crucial biological role in maintaining requisite hydroxybenzoate levels in the cell (PubMed:39216330).</text>
</comment>
<comment type="activity regulation">
    <text evidence="2">Activity is regulated by the effector molecules 3-hydroxybenzoyl-CoA and benzoyl-CoA, which bind to HbdR, alleviating its repression on the three target promoters and inducing the expression of the hbd genes.</text>
</comment>
<comment type="subunit">
    <text evidence="2">Homodimer in solution.</text>
</comment>
<reference key="1">
    <citation type="journal article" date="2015" name="Syst. Appl. Microbiol.">
        <title>Whole-genome analysis of Azoarcus sp. strain CIB provides genetic insights to its different lifestyles and predicts novel metabolic features.</title>
        <authorList>
            <person name="Martin-Moldes Z."/>
            <person name="Zamarro M.T."/>
            <person name="Del Cerro C."/>
            <person name="Valencia A."/>
            <person name="Gomez M.J."/>
            <person name="Arcas A."/>
            <person name="Udaondo Z."/>
            <person name="Garcia J.L."/>
            <person name="Nogales J."/>
            <person name="Carmona M."/>
            <person name="Diaz E."/>
        </authorList>
    </citation>
    <scope>NUCLEOTIDE SEQUENCE [LARGE SCALE GENOMIC DNA]</scope>
    <source>
        <strain>CIB</strain>
    </source>
</reference>
<reference key="2">
    <citation type="journal article" date="2024" name="Microbiol. Res.">
        <title>Transcriptional regulation of the anaerobic 3-hydroxybenzoate degradation pathway in Aromatoleum sp. CIB.</title>
        <authorList>
            <person name="Fernandez-Arevalo U."/>
            <person name="Fuchs J."/>
            <person name="Boll M."/>
            <person name="Diaz E."/>
        </authorList>
    </citation>
    <scope>FUNCTION</scope>
    <scope>DNA-BINDING</scope>
    <scope>ACTIVITY REGULATION</scope>
    <scope>SUBUNIT</scope>
    <source>
        <strain>CIB</strain>
    </source>
</reference>
<feature type="chain" id="PRO_0000461506" description="HTH-type transcriptional regulator HbdR">
    <location>
        <begin position="1"/>
        <end position="229"/>
    </location>
</feature>
<feature type="domain" description="HTH tetR-type" evidence="1">
    <location>
        <begin position="20"/>
        <end position="80"/>
    </location>
</feature>
<feature type="DNA-binding region" description="H-T-H motif" evidence="1">
    <location>
        <begin position="43"/>
        <end position="62"/>
    </location>
</feature>
<gene>
    <name evidence="3" type="primary">hbdR</name>
    <name evidence="5" type="ordered locus">AzCIB_4608</name>
</gene>
<accession>P0DXG3</accession>
<dbReference type="EMBL" id="CP011072">
    <property type="protein sequence ID" value="AKU14494.1"/>
    <property type="molecule type" value="Genomic_DNA"/>
</dbReference>
<dbReference type="SMR" id="P0DXG3"/>
<dbReference type="KEGG" id="azi:AzCIB_4608"/>
<dbReference type="GO" id="GO:0003700">
    <property type="term" value="F:DNA-binding transcription factor activity"/>
    <property type="evidence" value="ECO:0007669"/>
    <property type="project" value="TreeGrafter"/>
</dbReference>
<dbReference type="GO" id="GO:0000976">
    <property type="term" value="F:transcription cis-regulatory region binding"/>
    <property type="evidence" value="ECO:0007669"/>
    <property type="project" value="TreeGrafter"/>
</dbReference>
<dbReference type="Gene3D" id="1.10.10.60">
    <property type="entry name" value="Homeodomain-like"/>
    <property type="match status" value="1"/>
</dbReference>
<dbReference type="Gene3D" id="1.10.357.10">
    <property type="entry name" value="Tetracycline Repressor, domain 2"/>
    <property type="match status" value="1"/>
</dbReference>
<dbReference type="InterPro" id="IPR023772">
    <property type="entry name" value="DNA-bd_HTH_TetR-type_CS"/>
</dbReference>
<dbReference type="InterPro" id="IPR009057">
    <property type="entry name" value="Homeodomain-like_sf"/>
</dbReference>
<dbReference type="InterPro" id="IPR050109">
    <property type="entry name" value="HTH-type_TetR-like_transc_reg"/>
</dbReference>
<dbReference type="InterPro" id="IPR001647">
    <property type="entry name" value="HTH_TetR"/>
</dbReference>
<dbReference type="InterPro" id="IPR041490">
    <property type="entry name" value="KstR2_TetR_C"/>
</dbReference>
<dbReference type="InterPro" id="IPR036271">
    <property type="entry name" value="Tet_transcr_reg_TetR-rel_C_sf"/>
</dbReference>
<dbReference type="PANTHER" id="PTHR30055:SF226">
    <property type="entry name" value="HTH-TYPE TRANSCRIPTIONAL REGULATOR PKSA"/>
    <property type="match status" value="1"/>
</dbReference>
<dbReference type="PANTHER" id="PTHR30055">
    <property type="entry name" value="HTH-TYPE TRANSCRIPTIONAL REGULATOR RUTR"/>
    <property type="match status" value="1"/>
</dbReference>
<dbReference type="Pfam" id="PF17932">
    <property type="entry name" value="TetR_C_24"/>
    <property type="match status" value="1"/>
</dbReference>
<dbReference type="Pfam" id="PF00440">
    <property type="entry name" value="TetR_N"/>
    <property type="match status" value="1"/>
</dbReference>
<dbReference type="PRINTS" id="PR00455">
    <property type="entry name" value="HTHTETR"/>
</dbReference>
<dbReference type="SUPFAM" id="SSF46689">
    <property type="entry name" value="Homeodomain-like"/>
    <property type="match status" value="1"/>
</dbReference>
<dbReference type="SUPFAM" id="SSF48498">
    <property type="entry name" value="Tetracyclin repressor-like, C-terminal domain"/>
    <property type="match status" value="1"/>
</dbReference>
<dbReference type="PROSITE" id="PS01081">
    <property type="entry name" value="HTH_TETR_1"/>
    <property type="match status" value="1"/>
</dbReference>
<dbReference type="PROSITE" id="PS50977">
    <property type="entry name" value="HTH_TETR_2"/>
    <property type="match status" value="1"/>
</dbReference>
<name>HBDR_AROS1</name>
<organism>
    <name type="scientific">Aromatoleum sp. (strain CIB)</name>
    <name type="common">Azoarcus sp. (strain CIB)</name>
    <dbReference type="NCBI Taxonomy" id="198107"/>
    <lineage>
        <taxon>Bacteria</taxon>
        <taxon>Pseudomonadati</taxon>
        <taxon>Pseudomonadota</taxon>
        <taxon>Betaproteobacteria</taxon>
        <taxon>Rhodocyclales</taxon>
        <taxon>Zoogloeaceae</taxon>
        <taxon>Azoarcus</taxon>
    </lineage>
</organism>
<proteinExistence type="evidence at protein level"/>
<keyword id="KW-0010">Activator</keyword>
<keyword id="KW-0238">DNA-binding</keyword>
<keyword id="KW-0678">Repressor</keyword>
<keyword id="KW-0804">Transcription</keyword>
<keyword id="KW-0805">Transcription regulation</keyword>
<evidence type="ECO:0000255" key="1">
    <source>
        <dbReference type="PROSITE-ProRule" id="PRU00335"/>
    </source>
</evidence>
<evidence type="ECO:0000269" key="2">
    <source>
    </source>
</evidence>
<evidence type="ECO:0000303" key="3">
    <source>
    </source>
</evidence>
<evidence type="ECO:0000305" key="4"/>
<evidence type="ECO:0000312" key="5">
    <source>
        <dbReference type="EMBL" id="AKU14494.1"/>
    </source>
</evidence>
<sequence>MDMSSAESVKSVVTDPKLVEERRHQIISAATKLFSEQGYYTTTILQIAREAKVSTGLIYQYFGDKDDILFLTLKNVLDTYEQEIPRQIEGLTHPVERLCHAVWAYCAVVDAQRDATVLAYRSTKSLRADRRVLIKDGETRTNRMIEKSIRACTAGGFMRPVNEYLLCYQIVNFAHAWALKHWAFVDRFSLAEYVEEGLLLLVEPFLTAKGKTAMAKVPRSAEALVREPT</sequence>